<gene>
    <name type="ORF">THAPSDRAFT_6461</name>
</gene>
<evidence type="ECO:0000255" key="1">
    <source>
        <dbReference type="HAMAP-Rule" id="MF_03115"/>
    </source>
</evidence>
<organism>
    <name type="scientific">Thalassiosira pseudonana</name>
    <name type="common">Marine diatom</name>
    <name type="synonym">Cyclotella nana</name>
    <dbReference type="NCBI Taxonomy" id="35128"/>
    <lineage>
        <taxon>Eukaryota</taxon>
        <taxon>Sar</taxon>
        <taxon>Stramenopiles</taxon>
        <taxon>Ochrophyta</taxon>
        <taxon>Bacillariophyta</taxon>
        <taxon>Coscinodiscophyceae</taxon>
        <taxon>Thalassiosirophycidae</taxon>
        <taxon>Thalassiosirales</taxon>
        <taxon>Thalassiosiraceae</taxon>
        <taxon>Thalassiosira</taxon>
    </lineage>
</organism>
<reference key="1">
    <citation type="journal article" date="2004" name="Science">
        <title>The genome of the diatom Thalassiosira pseudonana: ecology, evolution, and metabolism.</title>
        <authorList>
            <person name="Armbrust E.V."/>
            <person name="Berges J.A."/>
            <person name="Bowler C."/>
            <person name="Green B.R."/>
            <person name="Martinez D."/>
            <person name="Putnam N.H."/>
            <person name="Zhou S."/>
            <person name="Allen A.E."/>
            <person name="Apt K.E."/>
            <person name="Bechner M."/>
            <person name="Brzezinski M.A."/>
            <person name="Chaal B.K."/>
            <person name="Chiovitti A."/>
            <person name="Davis A.K."/>
            <person name="Demarest M.S."/>
            <person name="Detter J.C."/>
            <person name="Glavina T."/>
            <person name="Goodstein D."/>
            <person name="Hadi M.Z."/>
            <person name="Hellsten U."/>
            <person name="Hildebrand M."/>
            <person name="Jenkins B.D."/>
            <person name="Jurka J."/>
            <person name="Kapitonov V.V."/>
            <person name="Kroger N."/>
            <person name="Lau W.W."/>
            <person name="Lane T.W."/>
            <person name="Larimer F.W."/>
            <person name="Lippmeier J.C."/>
            <person name="Lucas S."/>
            <person name="Medina M."/>
            <person name="Montsant A."/>
            <person name="Obornik M."/>
            <person name="Parker M.S."/>
            <person name="Palenik B."/>
            <person name="Pazour G.J."/>
            <person name="Richardson P.M."/>
            <person name="Rynearson T.A."/>
            <person name="Saito M.A."/>
            <person name="Schwartz D.C."/>
            <person name="Thamatrakoln K."/>
            <person name="Valentin K."/>
            <person name="Vardi A."/>
            <person name="Wilkerson F.P."/>
            <person name="Rokhsar D.S."/>
        </authorList>
    </citation>
    <scope>NUCLEOTIDE SEQUENCE [LARGE SCALE GENOMIC DNA]</scope>
    <source>
        <strain>CCMP1335 / NEPCC58 / CCAP 1085/12</strain>
    </source>
</reference>
<reference key="2">
    <citation type="submission" date="2008-09" db="EMBL/GenBank/DDBJ databases">
        <authorList>
            <consortium name="Diatom Consortium"/>
            <person name="Grigoriev I."/>
            <person name="Grimwood J."/>
            <person name="Kuo A."/>
            <person name="Otillar R.P."/>
            <person name="Salamov A."/>
            <person name="Detter J.C."/>
            <person name="Schmutz J."/>
            <person name="Lindquist E."/>
            <person name="Shapiro H."/>
            <person name="Lucas S."/>
            <person name="Glavina del Rio T."/>
            <person name="Bruce D."/>
            <person name="Pitluck S."/>
            <person name="Rokhsar D."/>
            <person name="Armbrust V."/>
        </authorList>
    </citation>
    <scope>GENOME REANNOTATION</scope>
    <source>
        <strain>CCMP1335 / NEPCC58 / CCAP 1085/12</strain>
    </source>
</reference>
<accession>B8C4D7</accession>
<sequence length="275" mass="28030">MTSASIHIGSYTSTTNGNTTVVKAPTKESLSTCLSATATTTSPLDSIDIYINTSDLPTHYDSLALASIVPSLSPGGVLSVHVVSASSSAASNESAAVDVVNWSAITTSFVLAGLKAESEQRDGSGGRVYTARKATASQSASSAAATGRINLGGAKTKVKLSLDDDDDDQLIDEDDLLNGGGGMLAPPPTIDTEARAKSNLDDCGGRKACDNCTCGRAEQEAADAAGGPNEQQSKSSACGNCAKGDAFRCAGCPYLGMPAFKEGEEHLVLKLNDDV</sequence>
<dbReference type="EMBL" id="CM000643">
    <property type="protein sequence ID" value="EED91704.1"/>
    <property type="molecule type" value="Genomic_DNA"/>
</dbReference>
<dbReference type="RefSeq" id="XP_002291597.1">
    <property type="nucleotide sequence ID" value="XM_002291561.1"/>
</dbReference>
<dbReference type="SMR" id="B8C4D7"/>
<dbReference type="STRING" id="35128.B8C4D7"/>
<dbReference type="PaxDb" id="35128-Thaps6461"/>
<dbReference type="EnsemblProtists" id="EED91704">
    <property type="protein sequence ID" value="EED91704"/>
    <property type="gene ID" value="THAPSDRAFT_6461"/>
</dbReference>
<dbReference type="GeneID" id="7442774"/>
<dbReference type="KEGG" id="tps:THAPSDRAFT_6461"/>
<dbReference type="eggNOG" id="KOG4020">
    <property type="taxonomic scope" value="Eukaryota"/>
</dbReference>
<dbReference type="InParanoid" id="B8C4D7"/>
<dbReference type="OMA" id="KACDNCT"/>
<dbReference type="Proteomes" id="UP000001449">
    <property type="component" value="Chromosome 6"/>
</dbReference>
<dbReference type="GO" id="GO:0005737">
    <property type="term" value="C:cytoplasm"/>
    <property type="evidence" value="ECO:0000318"/>
    <property type="project" value="GO_Central"/>
</dbReference>
<dbReference type="GO" id="GO:0005758">
    <property type="term" value="C:mitochondrial intermembrane space"/>
    <property type="evidence" value="ECO:0007669"/>
    <property type="project" value="UniProtKB-SubCell"/>
</dbReference>
<dbReference type="GO" id="GO:0051537">
    <property type="term" value="F:2 iron, 2 sulfur cluster binding"/>
    <property type="evidence" value="ECO:0007669"/>
    <property type="project" value="UniProtKB-UniRule"/>
</dbReference>
<dbReference type="GO" id="GO:0051539">
    <property type="term" value="F:4 iron, 4 sulfur cluster binding"/>
    <property type="evidence" value="ECO:0007669"/>
    <property type="project" value="UniProtKB-KW"/>
</dbReference>
<dbReference type="GO" id="GO:0009055">
    <property type="term" value="F:electron transfer activity"/>
    <property type="evidence" value="ECO:0007669"/>
    <property type="project" value="UniProtKB-UniRule"/>
</dbReference>
<dbReference type="GO" id="GO:0046872">
    <property type="term" value="F:metal ion binding"/>
    <property type="evidence" value="ECO:0007669"/>
    <property type="project" value="UniProtKB-KW"/>
</dbReference>
<dbReference type="GO" id="GO:0016226">
    <property type="term" value="P:iron-sulfur cluster assembly"/>
    <property type="evidence" value="ECO:0000318"/>
    <property type="project" value="GO_Central"/>
</dbReference>
<dbReference type="HAMAP" id="MF_03115">
    <property type="entry name" value="Anamorsin"/>
    <property type="match status" value="1"/>
</dbReference>
<dbReference type="InterPro" id="IPR007785">
    <property type="entry name" value="Anamorsin"/>
</dbReference>
<dbReference type="InterPro" id="IPR046408">
    <property type="entry name" value="CIAPIN1"/>
</dbReference>
<dbReference type="PANTHER" id="PTHR13273">
    <property type="entry name" value="ANAMORSIN"/>
    <property type="match status" value="1"/>
</dbReference>
<dbReference type="PANTHER" id="PTHR13273:SF14">
    <property type="entry name" value="ANAMORSIN"/>
    <property type="match status" value="1"/>
</dbReference>
<dbReference type="Pfam" id="PF05093">
    <property type="entry name" value="CIAPIN1"/>
    <property type="match status" value="1"/>
</dbReference>
<keyword id="KW-0001">2Fe-2S</keyword>
<keyword id="KW-0004">4Fe-4S</keyword>
<keyword id="KW-0963">Cytoplasm</keyword>
<keyword id="KW-0408">Iron</keyword>
<keyword id="KW-0411">Iron-sulfur</keyword>
<keyword id="KW-0479">Metal-binding</keyword>
<keyword id="KW-0496">Mitochondrion</keyword>
<keyword id="KW-1185">Reference proteome</keyword>
<feature type="chain" id="PRO_0000392372" description="Anamorsin homolog">
    <location>
        <begin position="1"/>
        <end position="275"/>
    </location>
</feature>
<feature type="region of interest" description="N-terminal SAM-like domain" evidence="1">
    <location>
        <begin position="1"/>
        <end position="147"/>
    </location>
</feature>
<feature type="region of interest" description="Linker" evidence="1">
    <location>
        <begin position="148"/>
        <end position="183"/>
    </location>
</feature>
<feature type="region of interest" description="Fe-S binding site A" evidence="1">
    <location>
        <begin position="203"/>
        <end position="214"/>
    </location>
</feature>
<feature type="region of interest" description="Fe-S binding site B" evidence="1">
    <location>
        <begin position="238"/>
        <end position="252"/>
    </location>
</feature>
<feature type="short sequence motif" description="Cx2C motif 1" evidence="1">
    <location>
        <begin position="238"/>
        <end position="241"/>
    </location>
</feature>
<feature type="short sequence motif" description="Cx2C motif 2" evidence="1">
    <location>
        <begin position="249"/>
        <end position="252"/>
    </location>
</feature>
<feature type="binding site" evidence="1">
    <location>
        <position position="203"/>
    </location>
    <ligand>
        <name>[2Fe-2S] cluster</name>
        <dbReference type="ChEBI" id="CHEBI:190135"/>
    </ligand>
</feature>
<feature type="binding site" evidence="1">
    <location>
        <position position="209"/>
    </location>
    <ligand>
        <name>[2Fe-2S] cluster</name>
        <dbReference type="ChEBI" id="CHEBI:190135"/>
    </ligand>
</feature>
<feature type="binding site" evidence="1">
    <location>
        <position position="212"/>
    </location>
    <ligand>
        <name>[2Fe-2S] cluster</name>
        <dbReference type="ChEBI" id="CHEBI:190135"/>
    </ligand>
</feature>
<feature type="binding site" evidence="1">
    <location>
        <position position="214"/>
    </location>
    <ligand>
        <name>[2Fe-2S] cluster</name>
        <dbReference type="ChEBI" id="CHEBI:190135"/>
    </ligand>
</feature>
<feature type="binding site" evidence="1">
    <location>
        <position position="238"/>
    </location>
    <ligand>
        <name>[4Fe-4S] cluster</name>
        <dbReference type="ChEBI" id="CHEBI:49883"/>
    </ligand>
</feature>
<feature type="binding site" evidence="1">
    <location>
        <position position="241"/>
    </location>
    <ligand>
        <name>[4Fe-4S] cluster</name>
        <dbReference type="ChEBI" id="CHEBI:49883"/>
    </ligand>
</feature>
<feature type="binding site" evidence="1">
    <location>
        <position position="249"/>
    </location>
    <ligand>
        <name>[4Fe-4S] cluster</name>
        <dbReference type="ChEBI" id="CHEBI:49883"/>
    </ligand>
</feature>
<feature type="binding site" evidence="1">
    <location>
        <position position="252"/>
    </location>
    <ligand>
        <name>[4Fe-4S] cluster</name>
        <dbReference type="ChEBI" id="CHEBI:49883"/>
    </ligand>
</feature>
<proteinExistence type="inferred from homology"/>
<comment type="function">
    <text evidence="1">Component of the cytosolic iron-sulfur (Fe-S) protein assembly (CIA) machinery. Required for the maturation of extramitochondrial Fe-S proteins. Part of an electron transfer chain functioning in an early step of cytosolic Fe-S biogenesis, facilitating the de novo assembly of a [4Fe-4S] cluster on the cytosolic Fe-S scaffold complex. Electrons are transferred from NADPH via a FAD- and FMN-containing diflavin oxidoreductase. Together with the diflavin oxidoreductase, also required for the assembly of the diferric tyrosyl radical cofactor of ribonucleotide reductase (RNR), probably by providing electrons for reduction during radical cofactor maturation in the catalytic small subunit.</text>
</comment>
<comment type="cofactor">
    <cofactor evidence="1">
        <name>[2Fe-2S] cluster</name>
        <dbReference type="ChEBI" id="CHEBI:190135"/>
    </cofactor>
</comment>
<comment type="cofactor">
    <cofactor evidence="1">
        <name>[4Fe-4S] cluster</name>
        <dbReference type="ChEBI" id="CHEBI:49883"/>
    </cofactor>
</comment>
<comment type="subunit">
    <text evidence="1">Monomer.</text>
</comment>
<comment type="subcellular location">
    <subcellularLocation>
        <location evidence="1">Cytoplasm</location>
    </subcellularLocation>
    <subcellularLocation>
        <location evidence="1">Mitochondrion intermembrane space</location>
    </subcellularLocation>
</comment>
<comment type="domain">
    <text evidence="1">The C-terminal domain binds 2 Fe-S clusters but is otherwise mostly in an intrinsically disordered conformation.</text>
</comment>
<comment type="domain">
    <text evidence="1">The N-terminal domain has structural similarity with S-adenosyl-L-methionine-dependent methyltransferases, but does not bind S-adenosyl-L-methionine. It is required for correct assembly of the 2 Fe-S clusters.</text>
</comment>
<comment type="domain">
    <text evidence="1">The twin Cx2C motifs are involved in the recognition by the mitochondrial MIA40-ERV1 disulfide relay system. The formation of 2 disulfide bonds in the Cx2C motifs through dithiol/disulfide exchange reactions effectively traps the protein in the mitochondrial intermembrane space.</text>
</comment>
<comment type="similarity">
    <text evidence="1">Belongs to the anamorsin family.</text>
</comment>
<name>DRE2_THAPS</name>
<protein>
    <recommendedName>
        <fullName evidence="1">Anamorsin homolog</fullName>
    </recommendedName>
    <alternativeName>
        <fullName evidence="1">Fe-S cluster assembly protein DRE2 homolog</fullName>
    </alternativeName>
</protein>